<sequence>MMKKIDVKILDPRVGKEFPLPTYATSGSAGLDLRACLDDAVELAPGDTTLVPTGLAIHIADPSLAAMMLPRSGLGHKHGIVLGNLVGLIDSDYQGQLMISVWNRGQDNFTIQPGERIAQMIFVPVVQAEFNLVEDFDATDRGEGGFGHSGRQ</sequence>
<evidence type="ECO:0000255" key="1">
    <source>
        <dbReference type="HAMAP-Rule" id="MF_00116"/>
    </source>
</evidence>
<feature type="chain" id="PRO_1000057769" description="Deoxyuridine 5'-triphosphate nucleotidohydrolase">
    <location>
        <begin position="1"/>
        <end position="152"/>
    </location>
</feature>
<feature type="binding site" evidence="1">
    <location>
        <begin position="71"/>
        <end position="73"/>
    </location>
    <ligand>
        <name>substrate</name>
    </ligand>
</feature>
<feature type="binding site" evidence="1">
    <location>
        <position position="84"/>
    </location>
    <ligand>
        <name>substrate</name>
    </ligand>
</feature>
<feature type="binding site" evidence="1">
    <location>
        <begin position="88"/>
        <end position="90"/>
    </location>
    <ligand>
        <name>substrate</name>
    </ligand>
</feature>
<feature type="binding site" evidence="1">
    <location>
        <position position="98"/>
    </location>
    <ligand>
        <name>substrate</name>
    </ligand>
</feature>
<proteinExistence type="inferred from homology"/>
<reference key="1">
    <citation type="journal article" date="2007" name="J. Bacteriol.">
        <title>The genome sequence of avian pathogenic Escherichia coli strain O1:K1:H7 shares strong similarities with human extraintestinal pathogenic E. coli genomes.</title>
        <authorList>
            <person name="Johnson T.J."/>
            <person name="Kariyawasam S."/>
            <person name="Wannemuehler Y."/>
            <person name="Mangiamele P."/>
            <person name="Johnson S.J."/>
            <person name="Doetkott C."/>
            <person name="Skyberg J.A."/>
            <person name="Lynne A.M."/>
            <person name="Johnson J.R."/>
            <person name="Nolan L.K."/>
        </authorList>
    </citation>
    <scope>NUCLEOTIDE SEQUENCE [LARGE SCALE GENOMIC DNA]</scope>
</reference>
<accession>A1AHH1</accession>
<dbReference type="EC" id="3.6.1.23" evidence="1"/>
<dbReference type="EMBL" id="CP000468">
    <property type="protein sequence ID" value="ABJ03111.1"/>
    <property type="molecule type" value="Genomic_DNA"/>
</dbReference>
<dbReference type="RefSeq" id="WP_000976066.1">
    <property type="nucleotide sequence ID" value="NZ_CADILS010000011.1"/>
</dbReference>
<dbReference type="SMR" id="A1AHH1"/>
<dbReference type="KEGG" id="ecv:APECO1_2821"/>
<dbReference type="HOGENOM" id="CLU_068508_1_1_6"/>
<dbReference type="UniPathway" id="UPA00610">
    <property type="reaction ID" value="UER00666"/>
</dbReference>
<dbReference type="Proteomes" id="UP000008216">
    <property type="component" value="Chromosome"/>
</dbReference>
<dbReference type="GO" id="GO:0004170">
    <property type="term" value="F:dUTP diphosphatase activity"/>
    <property type="evidence" value="ECO:0007669"/>
    <property type="project" value="UniProtKB-UniRule"/>
</dbReference>
<dbReference type="GO" id="GO:0000287">
    <property type="term" value="F:magnesium ion binding"/>
    <property type="evidence" value="ECO:0007669"/>
    <property type="project" value="UniProtKB-UniRule"/>
</dbReference>
<dbReference type="GO" id="GO:0006226">
    <property type="term" value="P:dUMP biosynthetic process"/>
    <property type="evidence" value="ECO:0007669"/>
    <property type="project" value="UniProtKB-UniRule"/>
</dbReference>
<dbReference type="GO" id="GO:0046081">
    <property type="term" value="P:dUTP catabolic process"/>
    <property type="evidence" value="ECO:0007669"/>
    <property type="project" value="InterPro"/>
</dbReference>
<dbReference type="CDD" id="cd07557">
    <property type="entry name" value="trimeric_dUTPase"/>
    <property type="match status" value="1"/>
</dbReference>
<dbReference type="FunFam" id="2.70.40.10:FF:000002">
    <property type="entry name" value="dUTP diphosphatase"/>
    <property type="match status" value="1"/>
</dbReference>
<dbReference type="Gene3D" id="2.70.40.10">
    <property type="match status" value="1"/>
</dbReference>
<dbReference type="HAMAP" id="MF_00116">
    <property type="entry name" value="dUTPase_bact"/>
    <property type="match status" value="1"/>
</dbReference>
<dbReference type="InterPro" id="IPR008181">
    <property type="entry name" value="dUTPase"/>
</dbReference>
<dbReference type="InterPro" id="IPR029054">
    <property type="entry name" value="dUTPase-like"/>
</dbReference>
<dbReference type="InterPro" id="IPR036157">
    <property type="entry name" value="dUTPase-like_sf"/>
</dbReference>
<dbReference type="InterPro" id="IPR033704">
    <property type="entry name" value="dUTPase_trimeric"/>
</dbReference>
<dbReference type="NCBIfam" id="TIGR00576">
    <property type="entry name" value="dut"/>
    <property type="match status" value="1"/>
</dbReference>
<dbReference type="NCBIfam" id="NF001862">
    <property type="entry name" value="PRK00601.1"/>
    <property type="match status" value="1"/>
</dbReference>
<dbReference type="PANTHER" id="PTHR11241">
    <property type="entry name" value="DEOXYURIDINE 5'-TRIPHOSPHATE NUCLEOTIDOHYDROLASE"/>
    <property type="match status" value="1"/>
</dbReference>
<dbReference type="PANTHER" id="PTHR11241:SF0">
    <property type="entry name" value="DEOXYURIDINE 5'-TRIPHOSPHATE NUCLEOTIDOHYDROLASE"/>
    <property type="match status" value="1"/>
</dbReference>
<dbReference type="Pfam" id="PF00692">
    <property type="entry name" value="dUTPase"/>
    <property type="match status" value="1"/>
</dbReference>
<dbReference type="SUPFAM" id="SSF51283">
    <property type="entry name" value="dUTPase-like"/>
    <property type="match status" value="1"/>
</dbReference>
<organism>
    <name type="scientific">Escherichia coli O1:K1 / APEC</name>
    <dbReference type="NCBI Taxonomy" id="405955"/>
    <lineage>
        <taxon>Bacteria</taxon>
        <taxon>Pseudomonadati</taxon>
        <taxon>Pseudomonadota</taxon>
        <taxon>Gammaproteobacteria</taxon>
        <taxon>Enterobacterales</taxon>
        <taxon>Enterobacteriaceae</taxon>
        <taxon>Escherichia</taxon>
    </lineage>
</organism>
<keyword id="KW-0378">Hydrolase</keyword>
<keyword id="KW-0460">Magnesium</keyword>
<keyword id="KW-0479">Metal-binding</keyword>
<keyword id="KW-0546">Nucleotide metabolism</keyword>
<keyword id="KW-1185">Reference proteome</keyword>
<gene>
    <name evidence="1" type="primary">dut</name>
    <name type="ordered locus">Ecok1_36170</name>
    <name type="ORF">APECO1_2821</name>
</gene>
<name>DUT_ECOK1</name>
<protein>
    <recommendedName>
        <fullName evidence="1">Deoxyuridine 5'-triphosphate nucleotidohydrolase</fullName>
        <shortName evidence="1">dUTPase</shortName>
        <ecNumber evidence="1">3.6.1.23</ecNumber>
    </recommendedName>
    <alternativeName>
        <fullName evidence="1">dUTP pyrophosphatase</fullName>
    </alternativeName>
</protein>
<comment type="function">
    <text evidence="1">This enzyme is involved in nucleotide metabolism: it produces dUMP, the immediate precursor of thymidine nucleotides and it decreases the intracellular concentration of dUTP so that uracil cannot be incorporated into DNA.</text>
</comment>
<comment type="catalytic activity">
    <reaction evidence="1">
        <text>dUTP + H2O = dUMP + diphosphate + H(+)</text>
        <dbReference type="Rhea" id="RHEA:10248"/>
        <dbReference type="ChEBI" id="CHEBI:15377"/>
        <dbReference type="ChEBI" id="CHEBI:15378"/>
        <dbReference type="ChEBI" id="CHEBI:33019"/>
        <dbReference type="ChEBI" id="CHEBI:61555"/>
        <dbReference type="ChEBI" id="CHEBI:246422"/>
        <dbReference type="EC" id="3.6.1.23"/>
    </reaction>
</comment>
<comment type="cofactor">
    <cofactor evidence="1">
        <name>Mg(2+)</name>
        <dbReference type="ChEBI" id="CHEBI:18420"/>
    </cofactor>
</comment>
<comment type="pathway">
    <text evidence="1">Pyrimidine metabolism; dUMP biosynthesis; dUMP from dCTP (dUTP route): step 2/2.</text>
</comment>
<comment type="subunit">
    <text evidence="1">Homotrimer.</text>
</comment>
<comment type="similarity">
    <text evidence="1">Belongs to the dUTPase family.</text>
</comment>